<reference evidence="3" key="1">
    <citation type="journal article" date="1990" name="J. Mol. Evol.">
        <title>Molecular evolution in the Drosophila yakuba period locus.</title>
        <authorList>
            <person name="Thackeray J.R."/>
            <person name="Kyriacou C.P."/>
        </authorList>
    </citation>
    <scope>NUCLEOTIDE SEQUENCE [GENOMIC DNA]</scope>
</reference>
<accession>Q24764</accession>
<proteinExistence type="inferred from homology"/>
<protein>
    <recommendedName>
        <fullName evidence="1">Circadian clock-controlled protein daywake</fullName>
    </recommendedName>
</protein>
<name>CCCP_DROYA</name>
<gene>
    <name evidence="1" type="primary">dyw</name>
    <name evidence="1" type="synonym">anon-3B1.2</name>
    <name type="ORF">GE16930</name>
</gene>
<keyword id="KW-0090">Biological rhythms</keyword>
<keyword id="KW-0732">Signal</keyword>
<dbReference type="EMBL" id="X84413">
    <property type="protein sequence ID" value="CAA59131.1"/>
    <property type="molecule type" value="Genomic_DNA"/>
</dbReference>
<dbReference type="SMR" id="Q24764"/>
<dbReference type="eggNOG" id="ENOG502T6I4">
    <property type="taxonomic scope" value="Eukaryota"/>
</dbReference>
<dbReference type="OrthoDB" id="8118208at2759"/>
<dbReference type="GO" id="GO:0005615">
    <property type="term" value="C:extracellular space"/>
    <property type="evidence" value="ECO:0007669"/>
    <property type="project" value="TreeGrafter"/>
</dbReference>
<dbReference type="GO" id="GO:0007623">
    <property type="term" value="P:circadian rhythm"/>
    <property type="evidence" value="ECO:0000250"/>
    <property type="project" value="UniProtKB"/>
</dbReference>
<dbReference type="GO" id="GO:0010841">
    <property type="term" value="P:positive regulation of circadian sleep/wake cycle, wakefulness"/>
    <property type="evidence" value="ECO:0007669"/>
    <property type="project" value="EnsemblMetazoa"/>
</dbReference>
<dbReference type="FunFam" id="3.15.10.30:FF:000001">
    <property type="entry name" value="Takeout-like protein 1"/>
    <property type="match status" value="1"/>
</dbReference>
<dbReference type="Gene3D" id="3.15.10.30">
    <property type="entry name" value="Haemolymph juvenile hormone binding protein"/>
    <property type="match status" value="1"/>
</dbReference>
<dbReference type="InterPro" id="IPR010562">
    <property type="entry name" value="Haemolymph_juvenile_hormone-bd"/>
</dbReference>
<dbReference type="InterPro" id="IPR038606">
    <property type="entry name" value="To_sf"/>
</dbReference>
<dbReference type="PANTHER" id="PTHR11008:SF32">
    <property type="entry name" value="CIRCADIAN CLOCK-CONTROLLED PROTEIN DAYWAKE-RELATED"/>
    <property type="match status" value="1"/>
</dbReference>
<dbReference type="PANTHER" id="PTHR11008">
    <property type="entry name" value="PROTEIN TAKEOUT-LIKE PROTEIN"/>
    <property type="match status" value="1"/>
</dbReference>
<dbReference type="Pfam" id="PF06585">
    <property type="entry name" value="JHBP"/>
    <property type="match status" value="1"/>
</dbReference>
<dbReference type="SMART" id="SM00700">
    <property type="entry name" value="JHBP"/>
    <property type="match status" value="1"/>
</dbReference>
<feature type="signal peptide" evidence="2">
    <location>
        <begin position="1"/>
        <end position="25"/>
    </location>
</feature>
<feature type="chain" id="PRO_0000020861" description="Circadian clock-controlled protein daywake">
    <location>
        <begin position="26"/>
        <end position="260"/>
    </location>
</feature>
<sequence>MQLTSASVCLLWMGLLSWVSHRIDASQGFPSPLKRCKLQEESCLVAQAQTFFQAFQKGIPERQVAALEPIDLGTMRIESGGHSESLKFKLVMSDAKLYNLANSVVVKSLKGFTKDLTKPLKLTLLMDTPELEVRAKYDVDGKLLILPIVSKGDLTIRMNEVQTKRRITAEPVKRSDGHSYLNITDYKTITKIKGGHFDLSNLFDDNKELRESTLKVLNQEWNTLALDVQPKINEACSKAFRAILQSLWANIPYDEFFKAE</sequence>
<evidence type="ECO:0000250" key="1">
    <source>
        <dbReference type="UniProtKB" id="O76879"/>
    </source>
</evidence>
<evidence type="ECO:0000255" key="2"/>
<evidence type="ECO:0000305" key="3"/>
<organism>
    <name type="scientific">Drosophila yakuba</name>
    <name type="common">Fruit fly</name>
    <dbReference type="NCBI Taxonomy" id="7245"/>
    <lineage>
        <taxon>Eukaryota</taxon>
        <taxon>Metazoa</taxon>
        <taxon>Ecdysozoa</taxon>
        <taxon>Arthropoda</taxon>
        <taxon>Hexapoda</taxon>
        <taxon>Insecta</taxon>
        <taxon>Pterygota</taxon>
        <taxon>Neoptera</taxon>
        <taxon>Endopterygota</taxon>
        <taxon>Diptera</taxon>
        <taxon>Brachycera</taxon>
        <taxon>Muscomorpha</taxon>
        <taxon>Ephydroidea</taxon>
        <taxon>Drosophilidae</taxon>
        <taxon>Drosophila</taxon>
        <taxon>Sophophora</taxon>
    </lineage>
</organism>
<comment type="function">
    <text evidence="1">Component of the circadian clock or downstream effector of clock function. Required for suppressing daytime sleep (siesta) under ambient environmental temperatures. Part of a heat avoidance mechanism that modulates daytime sleep behavior under different environmental temperatures to minimize the risk of heat exposure. Under cooler ambient temperatures, suppresses daytime sleep (siesta) and thus allows for longer periods of daytime activity.</text>
</comment>
<comment type="similarity">
    <text evidence="3">Belongs to the TO family.</text>
</comment>